<organism evidence="5">
    <name type="scientific">Drosophila melanogaster</name>
    <name type="common">Fruit fly</name>
    <dbReference type="NCBI Taxonomy" id="7227"/>
    <lineage>
        <taxon>Eukaryota</taxon>
        <taxon>Metazoa</taxon>
        <taxon>Ecdysozoa</taxon>
        <taxon>Arthropoda</taxon>
        <taxon>Hexapoda</taxon>
        <taxon>Insecta</taxon>
        <taxon>Pterygota</taxon>
        <taxon>Neoptera</taxon>
        <taxon>Endopterygota</taxon>
        <taxon>Diptera</taxon>
        <taxon>Brachycera</taxon>
        <taxon>Muscomorpha</taxon>
        <taxon>Ephydroidea</taxon>
        <taxon>Drosophilidae</taxon>
        <taxon>Drosophila</taxon>
        <taxon>Sophophora</taxon>
    </lineage>
</organism>
<feature type="signal peptide" evidence="1">
    <location>
        <begin position="1"/>
        <end position="19"/>
    </location>
</feature>
<feature type="chain" id="PRO_0000019726" description="Vanin-like protein 3" evidence="1">
    <location>
        <begin position="20"/>
        <end position="498"/>
    </location>
</feature>
<feature type="propeptide" id="PRO_0000450615" description="Removed in mature form" evidence="1">
    <location>
        <begin position="499"/>
        <end position="523"/>
    </location>
</feature>
<feature type="domain" description="CN hydrolase" evidence="2">
    <location>
        <begin position="29"/>
        <end position="298"/>
    </location>
</feature>
<feature type="active site" description="Proton acceptor" evidence="2">
    <location>
        <position position="74"/>
    </location>
</feature>
<feature type="active site" description="Proton donor" evidence="2">
    <location>
        <position position="167"/>
    </location>
</feature>
<feature type="active site" description="Nucleophile" evidence="2">
    <location>
        <position position="200"/>
    </location>
</feature>
<feature type="lipid moiety-binding region" description="GPI-anchor amidated asparagine" evidence="1">
    <location>
        <position position="498"/>
    </location>
</feature>
<feature type="glycosylation site" description="N-linked (GlcNAc...) asparagine" evidence="1">
    <location>
        <position position="64"/>
    </location>
</feature>
<feature type="glycosylation site" description="N-linked (GlcNAc...) asparagine" evidence="1">
    <location>
        <position position="177"/>
    </location>
</feature>
<feature type="glycosylation site" description="N-linked (GlcNAc...) asparagine" evidence="1">
    <location>
        <position position="192"/>
    </location>
</feature>
<feature type="glycosylation site" description="N-linked (GlcNAc...) asparagine" evidence="1">
    <location>
        <position position="330"/>
    </location>
</feature>
<feature type="glycosylation site" description="N-linked (GlcNAc...) asparagine" evidence="1">
    <location>
        <position position="468"/>
    </location>
</feature>
<accession>P83548</accession>
<accession>D8FT28</accession>
<protein>
    <recommendedName>
        <fullName evidence="7">Vanin-like protein 3</fullName>
        <ecNumber evidence="4">3.5.1.-</ecNumber>
    </recommendedName>
</protein>
<reference evidence="4" key="1">
    <citation type="journal article" date="2000" name="Science">
        <title>The genome sequence of Drosophila melanogaster.</title>
        <authorList>
            <person name="Adams M.D."/>
            <person name="Celniker S.E."/>
            <person name="Holt R.A."/>
            <person name="Evans C.A."/>
            <person name="Gocayne J.D."/>
            <person name="Amanatides P.G."/>
            <person name="Scherer S.E."/>
            <person name="Li P.W."/>
            <person name="Hoskins R.A."/>
            <person name="Galle R.F."/>
            <person name="George R.A."/>
            <person name="Lewis S.E."/>
            <person name="Richards S."/>
            <person name="Ashburner M."/>
            <person name="Henderson S.N."/>
            <person name="Sutton G.G."/>
            <person name="Wortman J.R."/>
            <person name="Yandell M.D."/>
            <person name="Zhang Q."/>
            <person name="Chen L.X."/>
            <person name="Brandon R.C."/>
            <person name="Rogers Y.-H.C."/>
            <person name="Blazej R.G."/>
            <person name="Champe M."/>
            <person name="Pfeiffer B.D."/>
            <person name="Wan K.H."/>
            <person name="Doyle C."/>
            <person name="Baxter E.G."/>
            <person name="Helt G."/>
            <person name="Nelson C.R."/>
            <person name="Miklos G.L.G."/>
            <person name="Abril J.F."/>
            <person name="Agbayani A."/>
            <person name="An H.-J."/>
            <person name="Andrews-Pfannkoch C."/>
            <person name="Baldwin D."/>
            <person name="Ballew R.M."/>
            <person name="Basu A."/>
            <person name="Baxendale J."/>
            <person name="Bayraktaroglu L."/>
            <person name="Beasley E.M."/>
            <person name="Beeson K.Y."/>
            <person name="Benos P.V."/>
            <person name="Berman B.P."/>
            <person name="Bhandari D."/>
            <person name="Bolshakov S."/>
            <person name="Borkova D."/>
            <person name="Botchan M.R."/>
            <person name="Bouck J."/>
            <person name="Brokstein P."/>
            <person name="Brottier P."/>
            <person name="Burtis K.C."/>
            <person name="Busam D.A."/>
            <person name="Butler H."/>
            <person name="Cadieu E."/>
            <person name="Center A."/>
            <person name="Chandra I."/>
            <person name="Cherry J.M."/>
            <person name="Cawley S."/>
            <person name="Dahlke C."/>
            <person name="Davenport L.B."/>
            <person name="Davies P."/>
            <person name="de Pablos B."/>
            <person name="Delcher A."/>
            <person name="Deng Z."/>
            <person name="Mays A.D."/>
            <person name="Dew I."/>
            <person name="Dietz S.M."/>
            <person name="Dodson K."/>
            <person name="Doup L.E."/>
            <person name="Downes M."/>
            <person name="Dugan-Rocha S."/>
            <person name="Dunkov B.C."/>
            <person name="Dunn P."/>
            <person name="Durbin K.J."/>
            <person name="Evangelista C.C."/>
            <person name="Ferraz C."/>
            <person name="Ferriera S."/>
            <person name="Fleischmann W."/>
            <person name="Fosler C."/>
            <person name="Gabrielian A.E."/>
            <person name="Garg N.S."/>
            <person name="Gelbart W.M."/>
            <person name="Glasser K."/>
            <person name="Glodek A."/>
            <person name="Gong F."/>
            <person name="Gorrell J.H."/>
            <person name="Gu Z."/>
            <person name="Guan P."/>
            <person name="Harris M."/>
            <person name="Harris N.L."/>
            <person name="Harvey D.A."/>
            <person name="Heiman T.J."/>
            <person name="Hernandez J.R."/>
            <person name="Houck J."/>
            <person name="Hostin D."/>
            <person name="Houston K.A."/>
            <person name="Howland T.J."/>
            <person name="Wei M.-H."/>
            <person name="Ibegwam C."/>
            <person name="Jalali M."/>
            <person name="Kalush F."/>
            <person name="Karpen G.H."/>
            <person name="Ke Z."/>
            <person name="Kennison J.A."/>
            <person name="Ketchum K.A."/>
            <person name="Kimmel B.E."/>
            <person name="Kodira C.D."/>
            <person name="Kraft C.L."/>
            <person name="Kravitz S."/>
            <person name="Kulp D."/>
            <person name="Lai Z."/>
            <person name="Lasko P."/>
            <person name="Lei Y."/>
            <person name="Levitsky A.A."/>
            <person name="Li J.H."/>
            <person name="Li Z."/>
            <person name="Liang Y."/>
            <person name="Lin X."/>
            <person name="Liu X."/>
            <person name="Mattei B."/>
            <person name="McIntosh T.C."/>
            <person name="McLeod M.P."/>
            <person name="McPherson D."/>
            <person name="Merkulov G."/>
            <person name="Milshina N.V."/>
            <person name="Mobarry C."/>
            <person name="Morris J."/>
            <person name="Moshrefi A."/>
            <person name="Mount S.M."/>
            <person name="Moy M."/>
            <person name="Murphy B."/>
            <person name="Murphy L."/>
            <person name="Muzny D.M."/>
            <person name="Nelson D.L."/>
            <person name="Nelson D.R."/>
            <person name="Nelson K.A."/>
            <person name="Nixon K."/>
            <person name="Nusskern D.R."/>
            <person name="Pacleb J.M."/>
            <person name="Palazzolo M."/>
            <person name="Pittman G.S."/>
            <person name="Pan S."/>
            <person name="Pollard J."/>
            <person name="Puri V."/>
            <person name="Reese M.G."/>
            <person name="Reinert K."/>
            <person name="Remington K."/>
            <person name="Saunders R.D.C."/>
            <person name="Scheeler F."/>
            <person name="Shen H."/>
            <person name="Shue B.C."/>
            <person name="Siden-Kiamos I."/>
            <person name="Simpson M."/>
            <person name="Skupski M.P."/>
            <person name="Smith T.J."/>
            <person name="Spier E."/>
            <person name="Spradling A.C."/>
            <person name="Stapleton M."/>
            <person name="Strong R."/>
            <person name="Sun E."/>
            <person name="Svirskas R."/>
            <person name="Tector C."/>
            <person name="Turner R."/>
            <person name="Venter E."/>
            <person name="Wang A.H."/>
            <person name="Wang X."/>
            <person name="Wang Z.-Y."/>
            <person name="Wassarman D.A."/>
            <person name="Weinstock G.M."/>
            <person name="Weissenbach J."/>
            <person name="Williams S.M."/>
            <person name="Woodage T."/>
            <person name="Worley K.C."/>
            <person name="Wu D."/>
            <person name="Yang S."/>
            <person name="Yao Q.A."/>
            <person name="Ye J."/>
            <person name="Yeh R.-F."/>
            <person name="Zaveri J.S."/>
            <person name="Zhan M."/>
            <person name="Zhang G."/>
            <person name="Zhao Q."/>
            <person name="Zheng L."/>
            <person name="Zheng X.H."/>
            <person name="Zhong F.N."/>
            <person name="Zhong W."/>
            <person name="Zhou X."/>
            <person name="Zhu S.C."/>
            <person name="Zhu X."/>
            <person name="Smith H.O."/>
            <person name="Gibbs R.A."/>
            <person name="Myers E.W."/>
            <person name="Rubin G.M."/>
            <person name="Venter J.C."/>
        </authorList>
    </citation>
    <scope>NUCLEOTIDE SEQUENCE [LARGE SCALE GENOMIC DNA]</scope>
    <source>
        <strain>Berkeley</strain>
    </source>
</reference>
<reference evidence="4" key="2">
    <citation type="journal article" date="2002" name="Genome Biol.">
        <title>Annotation of the Drosophila melanogaster euchromatic genome: a systematic review.</title>
        <authorList>
            <person name="Misra S."/>
            <person name="Crosby M.A."/>
            <person name="Mungall C.J."/>
            <person name="Matthews B.B."/>
            <person name="Campbell K.S."/>
            <person name="Hradecky P."/>
            <person name="Huang Y."/>
            <person name="Kaminker J.S."/>
            <person name="Millburn G.H."/>
            <person name="Prochnik S.E."/>
            <person name="Smith C.D."/>
            <person name="Tupy J.L."/>
            <person name="Whitfield E.J."/>
            <person name="Bayraktaroglu L."/>
            <person name="Berman B.P."/>
            <person name="Bettencourt B.R."/>
            <person name="Celniker S.E."/>
            <person name="de Grey A.D.N.J."/>
            <person name="Drysdale R.A."/>
            <person name="Harris N.L."/>
            <person name="Richter J."/>
            <person name="Russo S."/>
            <person name="Schroeder A.J."/>
            <person name="Shu S.Q."/>
            <person name="Stapleton M."/>
            <person name="Yamada C."/>
            <person name="Ashburner M."/>
            <person name="Gelbart W.M."/>
            <person name="Rubin G.M."/>
            <person name="Lewis S.E."/>
        </authorList>
    </citation>
    <scope>GENOME REANNOTATION</scope>
    <source>
        <strain>Berkeley</strain>
    </source>
</reference>
<reference evidence="6" key="3">
    <citation type="submission" date="2010-07" db="EMBL/GenBank/DDBJ databases">
        <authorList>
            <person name="Carlson J."/>
            <person name="Booth B."/>
            <person name="Frise E."/>
            <person name="Park S."/>
            <person name="Wan K."/>
            <person name="Yu C."/>
            <person name="Celniker S."/>
        </authorList>
    </citation>
    <scope>NUCLEOTIDE SEQUENCE [LARGE SCALE MRNA]</scope>
</reference>
<reference key="4">
    <citation type="journal article" date="2014" name="G3 (Bethesda)">
        <title>Developmental ethanol exposure leads to dysregulation of lipid metabolism and oxidative stress in Drosophila.</title>
        <authorList>
            <person name="Logan-Garbisch T."/>
            <person name="Bortolazzo A."/>
            <person name="Luu P."/>
            <person name="Ford A."/>
            <person name="Do D."/>
            <person name="Khodabakhshi P."/>
            <person name="French R.L."/>
        </authorList>
    </citation>
    <scope>TISSUE SPECIFICITY</scope>
    <scope>INDUCTION</scope>
</reference>
<sequence length="523" mass="59133">MAVFLRRFLWLISFTLVLTDDNSVENKFYIAGVVEYRPTFMGGTSEQLLQANLAGYLEIMASGNGTTDIIVFPEATLNSVITLTAVPKFTEQSLCEEQGDDDPEIAPFLRSLACAAREYGTYLVVNVKERVSEQCTSDETCSSRGYSIHNTNVVFDRQGAVISRYRKWNLYLEPSTNRTESPEIATFTTDFNVTFGHFICFDMLFYTPAQDLVEQLGIRHVIVTKMFNSELPFLTASQFQQGWAWANRVNLLASGGSLPQGGISGSGIYAGQQGALARLMITDELVGQRKLLLAKVPLDPEEPIATDEILEPEIMTPVKLKLLQQPELKNFTTWELPMVRGSSVDKRICQEDLCCEFRVTWTLEDTQPEYNYRLGVWVGQRRYEEEQYSAIRLCGLFACKGASVESCGLVSEEEVHLQDHRVVFTDLQILGEFVRRPRRLILPSTLSSSSFYALQPSQLAWSMEELANVTRIKMELRQPHSQLMTFAIYGNYFDEYANGGAGRLGTLLFLLITPLIMMHLFRE</sequence>
<name>VNNL3_DROME</name>
<dbReference type="EC" id="3.5.1.-" evidence="4"/>
<dbReference type="EMBL" id="AE014298">
    <property type="protein sequence ID" value="AAF46129.2"/>
    <property type="molecule type" value="Genomic_DNA"/>
</dbReference>
<dbReference type="EMBL" id="BT125050">
    <property type="protein sequence ID" value="ADJ93823.1"/>
    <property type="molecule type" value="mRNA"/>
</dbReference>
<dbReference type="RefSeq" id="NP_727067.1">
    <property type="nucleotide sequence ID" value="NM_167060.3"/>
</dbReference>
<dbReference type="SMR" id="P83548"/>
<dbReference type="GlyGen" id="P83548">
    <property type="glycosylation" value="5 sites"/>
</dbReference>
<dbReference type="PaxDb" id="7227-FBpp0070846"/>
<dbReference type="EnsemblMetazoa" id="FBtr0070881">
    <property type="protein sequence ID" value="FBpp0070846"/>
    <property type="gene ID" value="FBgn0052750"/>
</dbReference>
<dbReference type="GeneID" id="326238"/>
<dbReference type="KEGG" id="dme:Dmel_CG32750"/>
<dbReference type="UCSC" id="CG32750-RA">
    <property type="organism name" value="d. melanogaster"/>
</dbReference>
<dbReference type="AGR" id="FB:FBgn0052750"/>
<dbReference type="FlyBase" id="FBgn0052750">
    <property type="gene designation" value="CG32750"/>
</dbReference>
<dbReference type="VEuPathDB" id="VectorBase:FBgn0052750"/>
<dbReference type="eggNOG" id="KOG0806">
    <property type="taxonomic scope" value="Eukaryota"/>
</dbReference>
<dbReference type="GeneTree" id="ENSGT00390000013823"/>
<dbReference type="HOGENOM" id="CLU_033209_1_0_1"/>
<dbReference type="InParanoid" id="P83548"/>
<dbReference type="OMA" id="ADLCCDF"/>
<dbReference type="OrthoDB" id="10250282at2759"/>
<dbReference type="PhylomeDB" id="P83548"/>
<dbReference type="BioGRID-ORCS" id="326238">
    <property type="hits" value="0 hits in 3 CRISPR screens"/>
</dbReference>
<dbReference type="GenomeRNAi" id="326238"/>
<dbReference type="PRO" id="PR:P83548"/>
<dbReference type="Proteomes" id="UP000000803">
    <property type="component" value="Chromosome X"/>
</dbReference>
<dbReference type="Bgee" id="FBgn0052750">
    <property type="expression patterns" value="Expressed in adult anterior midgut class II enteroendocrine cell in adult midgut (Drosophila) and 11 other cell types or tissues"/>
</dbReference>
<dbReference type="GO" id="GO:0005886">
    <property type="term" value="C:plasma membrane"/>
    <property type="evidence" value="ECO:0007669"/>
    <property type="project" value="UniProtKB-SubCell"/>
</dbReference>
<dbReference type="GO" id="GO:0098552">
    <property type="term" value="C:side of membrane"/>
    <property type="evidence" value="ECO:0007669"/>
    <property type="project" value="UniProtKB-KW"/>
</dbReference>
<dbReference type="GO" id="GO:0017159">
    <property type="term" value="F:pantetheine hydrolase activity"/>
    <property type="evidence" value="ECO:0000250"/>
    <property type="project" value="FlyBase"/>
</dbReference>
<dbReference type="CDD" id="cd07567">
    <property type="entry name" value="biotinidase_like"/>
    <property type="match status" value="1"/>
</dbReference>
<dbReference type="Gene3D" id="3.60.110.10">
    <property type="entry name" value="Carbon-nitrogen hydrolase"/>
    <property type="match status" value="1"/>
</dbReference>
<dbReference type="InterPro" id="IPR012101">
    <property type="entry name" value="Biotinidase-like_euk"/>
</dbReference>
<dbReference type="InterPro" id="IPR040154">
    <property type="entry name" value="Biotinidase/VNN"/>
</dbReference>
<dbReference type="InterPro" id="IPR003010">
    <property type="entry name" value="C-N_Hydrolase"/>
</dbReference>
<dbReference type="InterPro" id="IPR036526">
    <property type="entry name" value="C-N_Hydrolase_sf"/>
</dbReference>
<dbReference type="InterPro" id="IPR043957">
    <property type="entry name" value="Vanin_C"/>
</dbReference>
<dbReference type="PANTHER" id="PTHR10609:SF14">
    <property type="entry name" value="BIOTINIDASE"/>
    <property type="match status" value="1"/>
</dbReference>
<dbReference type="PANTHER" id="PTHR10609">
    <property type="entry name" value="BIOTINIDASE-RELATED"/>
    <property type="match status" value="1"/>
</dbReference>
<dbReference type="Pfam" id="PF00795">
    <property type="entry name" value="CN_hydrolase"/>
    <property type="match status" value="1"/>
</dbReference>
<dbReference type="Pfam" id="PF19018">
    <property type="entry name" value="Vanin_C"/>
    <property type="match status" value="1"/>
</dbReference>
<dbReference type="PIRSF" id="PIRSF011861">
    <property type="entry name" value="Biotinidase"/>
    <property type="match status" value="1"/>
</dbReference>
<dbReference type="SUPFAM" id="SSF56317">
    <property type="entry name" value="Carbon-nitrogen hydrolase"/>
    <property type="match status" value="1"/>
</dbReference>
<dbReference type="PROSITE" id="PS50263">
    <property type="entry name" value="CN_HYDROLASE"/>
    <property type="match status" value="1"/>
</dbReference>
<proteinExistence type="evidence at transcript level"/>
<evidence type="ECO:0000255" key="1"/>
<evidence type="ECO:0000255" key="2">
    <source>
        <dbReference type="PROSITE-ProRule" id="PRU00054"/>
    </source>
</evidence>
<evidence type="ECO:0000269" key="3">
    <source>
    </source>
</evidence>
<evidence type="ECO:0000305" key="4"/>
<evidence type="ECO:0000312" key="5">
    <source>
        <dbReference type="EMBL" id="AAF46129.2"/>
    </source>
</evidence>
<evidence type="ECO:0000312" key="6">
    <source>
        <dbReference type="EMBL" id="ADJ93823.1"/>
    </source>
</evidence>
<evidence type="ECO:0000312" key="7">
    <source>
        <dbReference type="FlyBase" id="FBgn0052750"/>
    </source>
</evidence>
<keyword id="KW-1003">Cell membrane</keyword>
<keyword id="KW-0325">Glycoprotein</keyword>
<keyword id="KW-0336">GPI-anchor</keyword>
<keyword id="KW-0378">Hydrolase</keyword>
<keyword id="KW-0449">Lipoprotein</keyword>
<keyword id="KW-0472">Membrane</keyword>
<keyword id="KW-1185">Reference proteome</keyword>
<keyword id="KW-0732">Signal</keyword>
<gene>
    <name evidence="7" type="ORF">CG32750</name>
</gene>
<comment type="subcellular location">
    <subcellularLocation>
        <location evidence="1">Cell membrane</location>
        <topology evidence="1">Lipid-anchor</topology>
        <topology evidence="1">GPI-anchor</topology>
    </subcellularLocation>
</comment>
<comment type="tissue specificity">
    <text evidence="3">Expressed in third instar larvae.</text>
</comment>
<comment type="induction">
    <text evidence="3">Induced by ethanol.</text>
</comment>
<comment type="similarity">
    <text evidence="4">Belongs to the carbon-nitrogen hydrolase superfamily. BTD/VNN family.</text>
</comment>